<dbReference type="EMBL" id="AE017282">
    <property type="protein sequence ID" value="AAU91487.1"/>
    <property type="molecule type" value="Genomic_DNA"/>
</dbReference>
<dbReference type="RefSeq" id="WP_010961582.1">
    <property type="nucleotide sequence ID" value="NC_002977.6"/>
</dbReference>
<dbReference type="SMR" id="Q605D0"/>
<dbReference type="STRING" id="243233.MCA2354"/>
<dbReference type="GeneID" id="88225316"/>
<dbReference type="KEGG" id="mca:MCA2354"/>
<dbReference type="eggNOG" id="COG1841">
    <property type="taxonomic scope" value="Bacteria"/>
</dbReference>
<dbReference type="HOGENOM" id="CLU_131047_1_4_6"/>
<dbReference type="Proteomes" id="UP000006821">
    <property type="component" value="Chromosome"/>
</dbReference>
<dbReference type="GO" id="GO:0022625">
    <property type="term" value="C:cytosolic large ribosomal subunit"/>
    <property type="evidence" value="ECO:0007669"/>
    <property type="project" value="TreeGrafter"/>
</dbReference>
<dbReference type="GO" id="GO:0003735">
    <property type="term" value="F:structural constituent of ribosome"/>
    <property type="evidence" value="ECO:0007669"/>
    <property type="project" value="InterPro"/>
</dbReference>
<dbReference type="GO" id="GO:0006412">
    <property type="term" value="P:translation"/>
    <property type="evidence" value="ECO:0007669"/>
    <property type="project" value="UniProtKB-UniRule"/>
</dbReference>
<dbReference type="CDD" id="cd01658">
    <property type="entry name" value="Ribosomal_L30"/>
    <property type="match status" value="1"/>
</dbReference>
<dbReference type="FunFam" id="3.30.1390.20:FF:000001">
    <property type="entry name" value="50S ribosomal protein L30"/>
    <property type="match status" value="1"/>
</dbReference>
<dbReference type="Gene3D" id="3.30.1390.20">
    <property type="entry name" value="Ribosomal protein L30, ferredoxin-like fold domain"/>
    <property type="match status" value="1"/>
</dbReference>
<dbReference type="HAMAP" id="MF_01371_B">
    <property type="entry name" value="Ribosomal_uL30_B"/>
    <property type="match status" value="1"/>
</dbReference>
<dbReference type="InterPro" id="IPR036919">
    <property type="entry name" value="Ribo_uL30_ferredoxin-like_sf"/>
</dbReference>
<dbReference type="InterPro" id="IPR005996">
    <property type="entry name" value="Ribosomal_uL30_bac-type"/>
</dbReference>
<dbReference type="InterPro" id="IPR016082">
    <property type="entry name" value="Ribosomal_uL30_ferredoxin-like"/>
</dbReference>
<dbReference type="NCBIfam" id="TIGR01308">
    <property type="entry name" value="rpmD_bact"/>
    <property type="match status" value="1"/>
</dbReference>
<dbReference type="PANTHER" id="PTHR15892:SF2">
    <property type="entry name" value="LARGE RIBOSOMAL SUBUNIT PROTEIN UL30M"/>
    <property type="match status" value="1"/>
</dbReference>
<dbReference type="PANTHER" id="PTHR15892">
    <property type="entry name" value="MITOCHONDRIAL RIBOSOMAL PROTEIN L30"/>
    <property type="match status" value="1"/>
</dbReference>
<dbReference type="Pfam" id="PF00327">
    <property type="entry name" value="Ribosomal_L30"/>
    <property type="match status" value="1"/>
</dbReference>
<dbReference type="PIRSF" id="PIRSF002211">
    <property type="entry name" value="Ribosomal_L30_bac-type"/>
    <property type="match status" value="1"/>
</dbReference>
<dbReference type="SUPFAM" id="SSF55129">
    <property type="entry name" value="Ribosomal protein L30p/L7e"/>
    <property type="match status" value="1"/>
</dbReference>
<accession>Q605D0</accession>
<organism>
    <name type="scientific">Methylococcus capsulatus (strain ATCC 33009 / NCIMB 11132 / Bath)</name>
    <dbReference type="NCBI Taxonomy" id="243233"/>
    <lineage>
        <taxon>Bacteria</taxon>
        <taxon>Pseudomonadati</taxon>
        <taxon>Pseudomonadota</taxon>
        <taxon>Gammaproteobacteria</taxon>
        <taxon>Methylococcales</taxon>
        <taxon>Methylococcaceae</taxon>
        <taxon>Methylococcus</taxon>
    </lineage>
</organism>
<proteinExistence type="inferred from homology"/>
<sequence length="61" mass="6852">MTVKTLRVTQVRSANGRLETHKACLRGLGLRKPHHTVEVRGTPEILGMISKVSYLLKVEEI</sequence>
<gene>
    <name evidence="1" type="primary">rpmD</name>
    <name type="ordered locus">MCA2354</name>
</gene>
<name>RL30_METCA</name>
<protein>
    <recommendedName>
        <fullName evidence="1">Large ribosomal subunit protein uL30</fullName>
    </recommendedName>
    <alternativeName>
        <fullName evidence="2">50S ribosomal protein L30</fullName>
    </alternativeName>
</protein>
<comment type="subunit">
    <text evidence="1">Part of the 50S ribosomal subunit.</text>
</comment>
<comment type="similarity">
    <text evidence="1">Belongs to the universal ribosomal protein uL30 family.</text>
</comment>
<keyword id="KW-1185">Reference proteome</keyword>
<keyword id="KW-0687">Ribonucleoprotein</keyword>
<keyword id="KW-0689">Ribosomal protein</keyword>
<evidence type="ECO:0000255" key="1">
    <source>
        <dbReference type="HAMAP-Rule" id="MF_01371"/>
    </source>
</evidence>
<evidence type="ECO:0000305" key="2"/>
<reference key="1">
    <citation type="journal article" date="2004" name="PLoS Biol.">
        <title>Genomic insights into methanotrophy: the complete genome sequence of Methylococcus capsulatus (Bath).</title>
        <authorList>
            <person name="Ward N.L."/>
            <person name="Larsen O."/>
            <person name="Sakwa J."/>
            <person name="Bruseth L."/>
            <person name="Khouri H.M."/>
            <person name="Durkin A.S."/>
            <person name="Dimitrov G."/>
            <person name="Jiang L."/>
            <person name="Scanlan D."/>
            <person name="Kang K.H."/>
            <person name="Lewis M.R."/>
            <person name="Nelson K.E."/>
            <person name="Methe B.A."/>
            <person name="Wu M."/>
            <person name="Heidelberg J.F."/>
            <person name="Paulsen I.T."/>
            <person name="Fouts D.E."/>
            <person name="Ravel J."/>
            <person name="Tettelin H."/>
            <person name="Ren Q."/>
            <person name="Read T.D."/>
            <person name="DeBoy R.T."/>
            <person name="Seshadri R."/>
            <person name="Salzberg S.L."/>
            <person name="Jensen H.B."/>
            <person name="Birkeland N.K."/>
            <person name="Nelson W.C."/>
            <person name="Dodson R.J."/>
            <person name="Grindhaug S.H."/>
            <person name="Holt I.E."/>
            <person name="Eidhammer I."/>
            <person name="Jonasen I."/>
            <person name="Vanaken S."/>
            <person name="Utterback T.R."/>
            <person name="Feldblyum T.V."/>
            <person name="Fraser C.M."/>
            <person name="Lillehaug J.R."/>
            <person name="Eisen J.A."/>
        </authorList>
    </citation>
    <scope>NUCLEOTIDE SEQUENCE [LARGE SCALE GENOMIC DNA]</scope>
    <source>
        <strain>ATCC 33009 / NCIMB 11132 / Bath</strain>
    </source>
</reference>
<feature type="chain" id="PRO_0000273808" description="Large ribosomal subunit protein uL30">
    <location>
        <begin position="1"/>
        <end position="61"/>
    </location>
</feature>